<feature type="chain" id="PRO_0000330594" description="Structural protein ORF142">
    <location>
        <begin position="1"/>
        <end position="410"/>
    </location>
</feature>
<feature type="region of interest" description="Disordered" evidence="1">
    <location>
        <begin position="1"/>
        <end position="24"/>
    </location>
</feature>
<feature type="region of interest" description="Disordered" evidence="1">
    <location>
        <begin position="156"/>
        <end position="197"/>
    </location>
</feature>
<feature type="compositionally biased region" description="Acidic residues" evidence="1">
    <location>
        <begin position="161"/>
        <end position="188"/>
    </location>
</feature>
<gene>
    <name type="ORF">ORF142</name>
</gene>
<comment type="subcellular location">
    <subcellularLocation>
        <location>Virion</location>
    </subcellularLocation>
</comment>
<proteinExistence type="evidence at protein level"/>
<keyword id="KW-1185">Reference proteome</keyword>
<keyword id="KW-0946">Virion</keyword>
<accession>Q06VD9</accession>
<dbReference type="EMBL" id="DQ517337">
    <property type="protein sequence ID" value="ABF70659.1"/>
    <property type="molecule type" value="Genomic_DNA"/>
</dbReference>
<dbReference type="RefSeq" id="YP_803365.1">
    <property type="nucleotide sequence ID" value="NC_008518.1"/>
</dbReference>
<dbReference type="KEGG" id="vg:5141662"/>
<dbReference type="Proteomes" id="UP000001323">
    <property type="component" value="Genome"/>
</dbReference>
<dbReference type="GO" id="GO:0044423">
    <property type="term" value="C:virion component"/>
    <property type="evidence" value="ECO:0007669"/>
    <property type="project" value="UniProtKB-KW"/>
</dbReference>
<sequence length="410" mass="48176">MNQNHTLDNERNDDDEHSNNHVDTNDMKNFISCIKSKSNINDDKEDQQRPVRYLSRTVINSMTRGQLLELVKSMYSDRSDIYHMNSIQLLTLINKTIGHNGNYVQVVTKDYINDLNVTQLRIFCKELQLDTTHDVDRMNKPMLEILLKSYFKNNYPTSTNDDNDNENRSDDDDDDDDYRNDREEVEDSDINKNVNISSYNNEDIEEVDERTKSLKIDRRLLKMHQDNAKLVDKIDMLKNTIEDLQNRLLTAETTRDDILRRYSILENRENIRDDDDNRNSTTISNLQNLLNNANIAMTRSRINVADLTASLNERTKQLEDCLTRGREKDASIDKLNLKVTELEKLLQIQRDTHQDATLKISNIRMNDNNATRIQISSLNDELHRCQDQIKSTSITVYNRIYSDLYERLWS</sequence>
<protein>
    <recommendedName>
        <fullName>Structural protein ORF142</fullName>
    </recommendedName>
</protein>
<name>Y142_TNAVC</name>
<reference key="1">
    <citation type="journal article" date="2006" name="Virology">
        <title>Sequence and organization of the Trichoplusia ni ascovirus 2c (Ascoviridae) genome.</title>
        <authorList>
            <person name="Wang L."/>
            <person name="Xue J."/>
            <person name="Seaborn C.P."/>
            <person name="Arif B.M."/>
            <person name="Cheng X.W."/>
        </authorList>
    </citation>
    <scope>NUCLEOTIDE SEQUENCE [LARGE SCALE GENOMIC DNA]</scope>
</reference>
<reference key="2">
    <citation type="journal article" date="2007" name="J. Gen. Virol.">
        <title>Identification of Trichoplusia ni ascovirus 2c virion structural proteins.</title>
        <authorList>
            <person name="Cui L."/>
            <person name="Cheng X."/>
            <person name="Li L."/>
            <person name="Li J."/>
        </authorList>
    </citation>
    <scope>IDENTIFICATION BY MASS SPECTROMETRY</scope>
</reference>
<organism>
    <name type="scientific">Trichoplusia ni ascovirus 2c</name>
    <name type="common">TnAV-2c</name>
    <dbReference type="NCBI Taxonomy" id="328615"/>
    <lineage>
        <taxon>Viruses</taxon>
        <taxon>Varidnaviria</taxon>
        <taxon>Bamfordvirae</taxon>
        <taxon>Nucleocytoviricota</taxon>
        <taxon>Megaviricetes</taxon>
        <taxon>Pimascovirales</taxon>
        <taxon>Ascoviridae</taxon>
        <taxon>Ascovirus</taxon>
    </lineage>
</organism>
<evidence type="ECO:0000256" key="1">
    <source>
        <dbReference type="SAM" id="MobiDB-lite"/>
    </source>
</evidence>
<organismHost>
    <name type="scientific">Noctuidae</name>
    <name type="common">owlet moths</name>
    <dbReference type="NCBI Taxonomy" id="7100"/>
</organismHost>